<feature type="chain" id="PRO_0000289214" description="Lactosylceramide 1,3-N-acetyl-beta-D-glucosaminyltransferase B">
    <location>
        <begin position="1"/>
        <end position="382"/>
    </location>
</feature>
<feature type="topological domain" description="Cytoplasmic" evidence="4">
    <location>
        <begin position="1"/>
        <end position="13"/>
    </location>
</feature>
<feature type="transmembrane region" description="Helical; Signal-anchor for type II membrane protein" evidence="4">
    <location>
        <begin position="14"/>
        <end position="30"/>
    </location>
</feature>
<feature type="topological domain" description="Lumenal" evidence="4">
    <location>
        <begin position="31"/>
        <end position="382"/>
    </location>
</feature>
<feature type="glycosylation site" description="N-linked (GlcNAc...) asparagine" evidence="4">
    <location>
        <position position="57"/>
    </location>
</feature>
<feature type="glycosylation site" description="N-linked (GlcNAc...) asparagine" evidence="4">
    <location>
        <position position="112"/>
    </location>
</feature>
<feature type="glycosylation site" description="N-linked (GlcNAc...) asparagine" evidence="4">
    <location>
        <position position="167"/>
    </location>
</feature>
<feature type="glycosylation site" description="N-linked (GlcNAc...) asparagine" evidence="4">
    <location>
        <position position="276"/>
    </location>
</feature>
<name>B3G5B_DANRE</name>
<organism>
    <name type="scientific">Danio rerio</name>
    <name type="common">Zebrafish</name>
    <name type="synonym">Brachydanio rerio</name>
    <dbReference type="NCBI Taxonomy" id="7955"/>
    <lineage>
        <taxon>Eukaryota</taxon>
        <taxon>Metazoa</taxon>
        <taxon>Chordata</taxon>
        <taxon>Craniata</taxon>
        <taxon>Vertebrata</taxon>
        <taxon>Euteleostomi</taxon>
        <taxon>Actinopterygii</taxon>
        <taxon>Neopterygii</taxon>
        <taxon>Teleostei</taxon>
        <taxon>Ostariophysi</taxon>
        <taxon>Cypriniformes</taxon>
        <taxon>Danionidae</taxon>
        <taxon>Danioninae</taxon>
        <taxon>Danio</taxon>
    </lineage>
</organism>
<reference key="1">
    <citation type="submission" date="2004-10" db="EMBL/GenBank/DDBJ databases">
        <authorList>
            <consortium name="NIH - Zebrafish Gene Collection (ZGC) project"/>
        </authorList>
    </citation>
    <scope>NUCLEOTIDE SEQUENCE [LARGE SCALE MRNA]</scope>
    <source>
        <tissue>Olfactory epithelium</tissue>
    </source>
</reference>
<comment type="function">
    <text evidence="3">Beta-1,3-N-acetylglucosaminyltransferase that plays a key role in the synthesis of lacto- or neolacto-series carbohydrate chains on glycolipids.</text>
</comment>
<comment type="catalytic activity">
    <reaction evidence="3">
        <text>a beta-D-Gal-(1-&gt;4)-beta-D-Glc-(1&lt;-&gt;1)-Cer(d18:1(4E)) + UDP-N-acetyl-alpha-D-glucosamine = a beta-D-GlcNAc-(1-&gt;3)-beta-D-Gal-(1-&gt;4)-beta-D-Glc-(1&lt;-&gt;1)-Cer(d18:1(4E)) + UDP + H(+)</text>
        <dbReference type="Rhea" id="RHEA:13905"/>
        <dbReference type="ChEBI" id="CHEBI:15378"/>
        <dbReference type="ChEBI" id="CHEBI:17103"/>
        <dbReference type="ChEBI" id="CHEBI:17950"/>
        <dbReference type="ChEBI" id="CHEBI:57705"/>
        <dbReference type="ChEBI" id="CHEBI:58223"/>
        <dbReference type="EC" id="2.4.1.206"/>
    </reaction>
    <physiologicalReaction direction="left-to-right" evidence="3">
        <dbReference type="Rhea" id="RHEA:13906"/>
    </physiologicalReaction>
</comment>
<comment type="catalytic activity">
    <reaction evidence="3">
        <text>a neolactoside nLc4Cer(d18:1(4E)) + UDP-N-acetyl-alpha-D-glucosamine = a neolactoside IV(3)-beta-GlcNAc-nLc4Cer(d18:1(4E)) + UDP + H(+)</text>
        <dbReference type="Rhea" id="RHEA:23004"/>
        <dbReference type="ChEBI" id="CHEBI:15378"/>
        <dbReference type="ChEBI" id="CHEBI:17006"/>
        <dbReference type="ChEBI" id="CHEBI:57705"/>
        <dbReference type="ChEBI" id="CHEBI:58223"/>
        <dbReference type="ChEBI" id="CHEBI:142448"/>
    </reaction>
    <physiologicalReaction direction="left-to-right" evidence="3">
        <dbReference type="Rhea" id="RHEA:23005"/>
    </physiologicalReaction>
</comment>
<comment type="pathway">
    <text>Protein modification; protein glycosylation.</text>
</comment>
<comment type="subcellular location">
    <subcellularLocation>
        <location evidence="1">Golgi apparatus membrane</location>
        <topology evidence="1">Single-pass type II membrane protein</topology>
    </subcellularLocation>
</comment>
<comment type="similarity">
    <text evidence="5">Belongs to the glycosyltransferase 31 family.</text>
</comment>
<dbReference type="EC" id="2.4.1.206" evidence="2"/>
<dbReference type="EMBL" id="BC083259">
    <property type="protein sequence ID" value="AAH83259.1"/>
    <property type="molecule type" value="mRNA"/>
</dbReference>
<dbReference type="SMR" id="Q5XJP0"/>
<dbReference type="FunCoup" id="Q5XJP0">
    <property type="interactions" value="5"/>
</dbReference>
<dbReference type="STRING" id="7955.ENSDARP00000123385"/>
<dbReference type="GlyCosmos" id="Q5XJP0">
    <property type="glycosylation" value="4 sites, No reported glycans"/>
</dbReference>
<dbReference type="PaxDb" id="7955-ENSDARP00000123385"/>
<dbReference type="AGR" id="ZFIN:ZDB-GENE-041010-166"/>
<dbReference type="ZFIN" id="ZDB-GENE-041010-166">
    <property type="gene designation" value="b3gnt5b"/>
</dbReference>
<dbReference type="eggNOG" id="KOG2287">
    <property type="taxonomic scope" value="Eukaryota"/>
</dbReference>
<dbReference type="InParanoid" id="Q5XJP0"/>
<dbReference type="UniPathway" id="UPA00378"/>
<dbReference type="PRO" id="PR:Q5XJP0"/>
<dbReference type="Proteomes" id="UP000000437">
    <property type="component" value="Unplaced"/>
</dbReference>
<dbReference type="GO" id="GO:0000139">
    <property type="term" value="C:Golgi membrane"/>
    <property type="evidence" value="ECO:0000318"/>
    <property type="project" value="GO_Central"/>
</dbReference>
<dbReference type="GO" id="GO:0016757">
    <property type="term" value="F:glycosyltransferase activity"/>
    <property type="evidence" value="ECO:0000318"/>
    <property type="project" value="GO_Central"/>
</dbReference>
<dbReference type="GO" id="GO:0047256">
    <property type="term" value="F:lactosylceramide 1,3-N-acetyl-beta-D-glucosaminyltransferase activity"/>
    <property type="evidence" value="ECO:0007669"/>
    <property type="project" value="UniProtKB-EC"/>
</dbReference>
<dbReference type="GO" id="GO:0006493">
    <property type="term" value="P:protein O-linked glycosylation"/>
    <property type="evidence" value="ECO:0000318"/>
    <property type="project" value="GO_Central"/>
</dbReference>
<dbReference type="FunFam" id="3.90.550.50:FF:000019">
    <property type="entry name" value="Hexosyltransferase"/>
    <property type="match status" value="1"/>
</dbReference>
<dbReference type="Gene3D" id="3.90.550.50">
    <property type="match status" value="1"/>
</dbReference>
<dbReference type="InterPro" id="IPR002659">
    <property type="entry name" value="Glyco_trans_31"/>
</dbReference>
<dbReference type="PANTHER" id="PTHR11214">
    <property type="entry name" value="BETA-1,3-N-ACETYLGLUCOSAMINYLTRANSFERASE"/>
    <property type="match status" value="1"/>
</dbReference>
<dbReference type="PANTHER" id="PTHR11214:SF21">
    <property type="entry name" value="LACTOSYLCERAMIDE 1,3-N-ACETYL-BETA-D-GLUCOSAMINYLTRANSFERASE"/>
    <property type="match status" value="1"/>
</dbReference>
<dbReference type="Pfam" id="PF01762">
    <property type="entry name" value="Galactosyl_T"/>
    <property type="match status" value="1"/>
</dbReference>
<accession>Q5XJP0</accession>
<proteinExistence type="evidence at transcript level"/>
<protein>
    <recommendedName>
        <fullName>Lactosylceramide 1,3-N-acetyl-beta-D-glucosaminyltransferase B</fullName>
        <ecNumber evidence="2">2.4.1.206</ecNumber>
    </recommendedName>
    <alternativeName>
        <fullName>Lactotriaosylceramide synthase B</fullName>
        <shortName>Lc(3)Cer synthase B</shortName>
        <shortName>Lc3 synthase B</shortName>
    </alternativeName>
    <alternativeName>
        <fullName>UDP-GlcNAc:beta-Gal beta-1,3-N-acetylglucosaminyltransferase 5B</fullName>
        <shortName>BGnT-5B</shortName>
        <shortName>Beta-1,3-Gn-T5B</shortName>
        <shortName>Beta-1,3-N-acetylglucosaminyltransferase 5B</shortName>
        <shortName>Beta3Gn-T5B</shortName>
    </alternativeName>
</protein>
<gene>
    <name type="primary">b3gnt5b</name>
    <name type="ORF">zgc:101733</name>
</gene>
<evidence type="ECO:0000250" key="1"/>
<evidence type="ECO:0000250" key="2">
    <source>
        <dbReference type="UniProtKB" id="Q8BGY6"/>
    </source>
</evidence>
<evidence type="ECO:0000250" key="3">
    <source>
        <dbReference type="UniProtKB" id="Q9BYG0"/>
    </source>
</evidence>
<evidence type="ECO:0000255" key="4"/>
<evidence type="ECO:0000305" key="5"/>
<sequence>MAVLKMPRFKKYHLRLMITCFSTLLLMTYWEKIDNCVVTHVMSFSYRYLFNSFKFINSSFIVNPEDAIKYNHRYLINHQTKCDNKDILLLLFVKSSSENFERRQAIRSTWGNETYIESTLGVTVKVLFALGLHPIPEERGKLKEDLMFEDQKYRDLIQQDFIDTFHNLTLKLLLQLGWKETYCHHAQFLMSADDDVFVHTPNLILYLQGFGQSNTRDLWIGGVHRGSPPNRDKESKYYVSRDLYPWLSYPDYTPGSGYVLSRDVVSRIYQASLTINASFHIDDVFLGICAKMMDVSPTDHAFFSGEGKAPHHHCIYSLMMTSHGHVSDIHEMWRHARNAEDVLISSGLFRRLYCTAVKVRLLCVPFFSNSYPCKAAFFEEDT</sequence>
<keyword id="KW-0325">Glycoprotein</keyword>
<keyword id="KW-0328">Glycosyltransferase</keyword>
<keyword id="KW-0333">Golgi apparatus</keyword>
<keyword id="KW-0472">Membrane</keyword>
<keyword id="KW-1185">Reference proteome</keyword>
<keyword id="KW-0735">Signal-anchor</keyword>
<keyword id="KW-0808">Transferase</keyword>
<keyword id="KW-0812">Transmembrane</keyword>
<keyword id="KW-1133">Transmembrane helix</keyword>